<name>ILVC_BARBK</name>
<keyword id="KW-0028">Amino-acid biosynthesis</keyword>
<keyword id="KW-0100">Branched-chain amino acid biosynthesis</keyword>
<keyword id="KW-0460">Magnesium</keyword>
<keyword id="KW-0479">Metal-binding</keyword>
<keyword id="KW-0521">NADP</keyword>
<keyword id="KW-0560">Oxidoreductase</keyword>
<accession>A1UT97</accession>
<comment type="function">
    <text evidence="1">Involved in the biosynthesis of branched-chain amino acids (BCAA). Catalyzes an alkyl-migration followed by a ketol-acid reduction of (S)-2-acetolactate (S2AL) to yield (R)-2,3-dihydroxy-isovalerate. In the isomerase reaction, S2AL is rearranged via a Mg-dependent methyl migration to produce 3-hydroxy-3-methyl-2-ketobutyrate (HMKB). In the reductase reaction, this 2-ketoacid undergoes a metal-dependent reduction by NADPH to yield (R)-2,3-dihydroxy-isovalerate.</text>
</comment>
<comment type="catalytic activity">
    <reaction evidence="1">
        <text>(2R)-2,3-dihydroxy-3-methylbutanoate + NADP(+) = (2S)-2-acetolactate + NADPH + H(+)</text>
        <dbReference type="Rhea" id="RHEA:22068"/>
        <dbReference type="ChEBI" id="CHEBI:15378"/>
        <dbReference type="ChEBI" id="CHEBI:49072"/>
        <dbReference type="ChEBI" id="CHEBI:57783"/>
        <dbReference type="ChEBI" id="CHEBI:58349"/>
        <dbReference type="ChEBI" id="CHEBI:58476"/>
        <dbReference type="EC" id="1.1.1.86"/>
    </reaction>
</comment>
<comment type="catalytic activity">
    <reaction evidence="1">
        <text>(2R,3R)-2,3-dihydroxy-3-methylpentanoate + NADP(+) = (S)-2-ethyl-2-hydroxy-3-oxobutanoate + NADPH + H(+)</text>
        <dbReference type="Rhea" id="RHEA:13493"/>
        <dbReference type="ChEBI" id="CHEBI:15378"/>
        <dbReference type="ChEBI" id="CHEBI:49256"/>
        <dbReference type="ChEBI" id="CHEBI:49258"/>
        <dbReference type="ChEBI" id="CHEBI:57783"/>
        <dbReference type="ChEBI" id="CHEBI:58349"/>
        <dbReference type="EC" id="1.1.1.86"/>
    </reaction>
</comment>
<comment type="cofactor">
    <cofactor evidence="1">
        <name>Mg(2+)</name>
        <dbReference type="ChEBI" id="CHEBI:18420"/>
    </cofactor>
    <text evidence="1">Binds 2 magnesium ions per subunit.</text>
</comment>
<comment type="pathway">
    <text evidence="1">Amino-acid biosynthesis; L-isoleucine biosynthesis; L-isoleucine from 2-oxobutanoate: step 2/4.</text>
</comment>
<comment type="pathway">
    <text evidence="1">Amino-acid biosynthesis; L-valine biosynthesis; L-valine from pyruvate: step 2/4.</text>
</comment>
<comment type="similarity">
    <text evidence="1">Belongs to the ketol-acid reductoisomerase family.</text>
</comment>
<protein>
    <recommendedName>
        <fullName evidence="1">Ketol-acid reductoisomerase (NADP(+))</fullName>
        <shortName evidence="1">KARI</shortName>
        <ecNumber evidence="1">1.1.1.86</ecNumber>
    </recommendedName>
    <alternativeName>
        <fullName evidence="1">Acetohydroxy-acid isomeroreductase</fullName>
        <shortName evidence="1">AHIR</shortName>
    </alternativeName>
    <alternativeName>
        <fullName evidence="1">Alpha-keto-beta-hydroxylacyl reductoisomerase</fullName>
    </alternativeName>
    <alternativeName>
        <fullName evidence="1">Ketol-acid reductoisomerase type 1</fullName>
    </alternativeName>
    <alternativeName>
        <fullName evidence="1">Ketol-acid reductoisomerase type I</fullName>
    </alternativeName>
</protein>
<evidence type="ECO:0000255" key="1">
    <source>
        <dbReference type="HAMAP-Rule" id="MF_00435"/>
    </source>
</evidence>
<evidence type="ECO:0000255" key="2">
    <source>
        <dbReference type="PROSITE-ProRule" id="PRU01197"/>
    </source>
</evidence>
<evidence type="ECO:0000255" key="3">
    <source>
        <dbReference type="PROSITE-ProRule" id="PRU01198"/>
    </source>
</evidence>
<feature type="chain" id="PRO_1000050480" description="Ketol-acid reductoisomerase (NADP(+))">
    <location>
        <begin position="1"/>
        <end position="339"/>
    </location>
</feature>
<feature type="domain" description="KARI N-terminal Rossmann" evidence="2">
    <location>
        <begin position="1"/>
        <end position="182"/>
    </location>
</feature>
<feature type="domain" description="KARI C-terminal knotted" evidence="3">
    <location>
        <begin position="183"/>
        <end position="328"/>
    </location>
</feature>
<feature type="active site" evidence="1">
    <location>
        <position position="108"/>
    </location>
</feature>
<feature type="binding site" evidence="1">
    <location>
        <begin position="24"/>
        <end position="27"/>
    </location>
    <ligand>
        <name>NADP(+)</name>
        <dbReference type="ChEBI" id="CHEBI:58349"/>
    </ligand>
</feature>
<feature type="binding site" evidence="1">
    <location>
        <position position="51"/>
    </location>
    <ligand>
        <name>NADP(+)</name>
        <dbReference type="ChEBI" id="CHEBI:58349"/>
    </ligand>
</feature>
<feature type="binding site" evidence="1">
    <location>
        <position position="53"/>
    </location>
    <ligand>
        <name>NADP(+)</name>
        <dbReference type="ChEBI" id="CHEBI:58349"/>
    </ligand>
</feature>
<feature type="binding site" evidence="1">
    <location>
        <begin position="83"/>
        <end position="86"/>
    </location>
    <ligand>
        <name>NADP(+)</name>
        <dbReference type="ChEBI" id="CHEBI:58349"/>
    </ligand>
</feature>
<feature type="binding site" evidence="1">
    <location>
        <position position="134"/>
    </location>
    <ligand>
        <name>NADP(+)</name>
        <dbReference type="ChEBI" id="CHEBI:58349"/>
    </ligand>
</feature>
<feature type="binding site" evidence="1">
    <location>
        <position position="191"/>
    </location>
    <ligand>
        <name>Mg(2+)</name>
        <dbReference type="ChEBI" id="CHEBI:18420"/>
        <label>1</label>
    </ligand>
</feature>
<feature type="binding site" evidence="1">
    <location>
        <position position="191"/>
    </location>
    <ligand>
        <name>Mg(2+)</name>
        <dbReference type="ChEBI" id="CHEBI:18420"/>
        <label>2</label>
    </ligand>
</feature>
<feature type="binding site" evidence="1">
    <location>
        <position position="195"/>
    </location>
    <ligand>
        <name>Mg(2+)</name>
        <dbReference type="ChEBI" id="CHEBI:18420"/>
        <label>1</label>
    </ligand>
</feature>
<feature type="binding site" evidence="1">
    <location>
        <position position="227"/>
    </location>
    <ligand>
        <name>Mg(2+)</name>
        <dbReference type="ChEBI" id="CHEBI:18420"/>
        <label>2</label>
    </ligand>
</feature>
<feature type="binding site" evidence="1">
    <location>
        <position position="231"/>
    </location>
    <ligand>
        <name>Mg(2+)</name>
        <dbReference type="ChEBI" id="CHEBI:18420"/>
        <label>2</label>
    </ligand>
</feature>
<feature type="binding site" evidence="1">
    <location>
        <position position="252"/>
    </location>
    <ligand>
        <name>substrate</name>
    </ligand>
</feature>
<reference key="1">
    <citation type="submission" date="2006-12" db="EMBL/GenBank/DDBJ databases">
        <authorList>
            <person name="Hendrix L."/>
            <person name="Mohamoud Y."/>
            <person name="Radune D."/>
            <person name="Shvartsbeyn A."/>
            <person name="Daugherty S."/>
            <person name="Dodson R."/>
            <person name="Durkin A.S."/>
            <person name="Harkins D."/>
            <person name="Huot H."/>
            <person name="Kothari S.P."/>
            <person name="Madupu R."/>
            <person name="Li J."/>
            <person name="Nelson W.C."/>
            <person name="Shrivastava S."/>
            <person name="Giglio M.G."/>
            <person name="Haft D."/>
            <person name="Selengut J."/>
            <person name="Fraser-Ligget C."/>
            <person name="Seshadri R."/>
        </authorList>
    </citation>
    <scope>NUCLEOTIDE SEQUENCE [LARGE SCALE GENOMIC DNA]</scope>
    <source>
        <strain>ATCC 35685 / KC583 / Herrer 020/F12,63</strain>
    </source>
</reference>
<proteinExistence type="inferred from homology"/>
<dbReference type="EC" id="1.1.1.86" evidence="1"/>
<dbReference type="EMBL" id="CP000524">
    <property type="protein sequence ID" value="ABM44512.1"/>
    <property type="molecule type" value="Genomic_DNA"/>
</dbReference>
<dbReference type="RefSeq" id="WP_005767368.1">
    <property type="nucleotide sequence ID" value="NC_008783.1"/>
</dbReference>
<dbReference type="SMR" id="A1UT97"/>
<dbReference type="STRING" id="360095.BARBAKC583_0917"/>
<dbReference type="GeneID" id="4683917"/>
<dbReference type="KEGG" id="bbk:BARBAKC583_0917"/>
<dbReference type="PATRIC" id="fig|360095.6.peg.888"/>
<dbReference type="eggNOG" id="COG0059">
    <property type="taxonomic scope" value="Bacteria"/>
</dbReference>
<dbReference type="HOGENOM" id="CLU_033821_0_1_5"/>
<dbReference type="OrthoDB" id="9804088at2"/>
<dbReference type="UniPathway" id="UPA00047">
    <property type="reaction ID" value="UER00056"/>
</dbReference>
<dbReference type="UniPathway" id="UPA00049">
    <property type="reaction ID" value="UER00060"/>
</dbReference>
<dbReference type="Proteomes" id="UP000000643">
    <property type="component" value="Chromosome"/>
</dbReference>
<dbReference type="GO" id="GO:0005829">
    <property type="term" value="C:cytosol"/>
    <property type="evidence" value="ECO:0007669"/>
    <property type="project" value="TreeGrafter"/>
</dbReference>
<dbReference type="GO" id="GO:0004455">
    <property type="term" value="F:ketol-acid reductoisomerase activity"/>
    <property type="evidence" value="ECO:0007669"/>
    <property type="project" value="UniProtKB-UniRule"/>
</dbReference>
<dbReference type="GO" id="GO:0000287">
    <property type="term" value="F:magnesium ion binding"/>
    <property type="evidence" value="ECO:0007669"/>
    <property type="project" value="UniProtKB-UniRule"/>
</dbReference>
<dbReference type="GO" id="GO:0050661">
    <property type="term" value="F:NADP binding"/>
    <property type="evidence" value="ECO:0007669"/>
    <property type="project" value="InterPro"/>
</dbReference>
<dbReference type="GO" id="GO:0009097">
    <property type="term" value="P:isoleucine biosynthetic process"/>
    <property type="evidence" value="ECO:0007669"/>
    <property type="project" value="UniProtKB-UniRule"/>
</dbReference>
<dbReference type="GO" id="GO:0009099">
    <property type="term" value="P:L-valine biosynthetic process"/>
    <property type="evidence" value="ECO:0007669"/>
    <property type="project" value="UniProtKB-UniRule"/>
</dbReference>
<dbReference type="FunFam" id="3.40.50.720:FF:000023">
    <property type="entry name" value="Ketol-acid reductoisomerase (NADP(+))"/>
    <property type="match status" value="1"/>
</dbReference>
<dbReference type="Gene3D" id="6.10.240.10">
    <property type="match status" value="1"/>
</dbReference>
<dbReference type="Gene3D" id="3.40.50.720">
    <property type="entry name" value="NAD(P)-binding Rossmann-like Domain"/>
    <property type="match status" value="1"/>
</dbReference>
<dbReference type="HAMAP" id="MF_00435">
    <property type="entry name" value="IlvC"/>
    <property type="match status" value="1"/>
</dbReference>
<dbReference type="InterPro" id="IPR008927">
    <property type="entry name" value="6-PGluconate_DH-like_C_sf"/>
</dbReference>
<dbReference type="InterPro" id="IPR013023">
    <property type="entry name" value="KARI"/>
</dbReference>
<dbReference type="InterPro" id="IPR000506">
    <property type="entry name" value="KARI_C"/>
</dbReference>
<dbReference type="InterPro" id="IPR013116">
    <property type="entry name" value="KARI_N"/>
</dbReference>
<dbReference type="InterPro" id="IPR014359">
    <property type="entry name" value="KARI_prok"/>
</dbReference>
<dbReference type="InterPro" id="IPR036291">
    <property type="entry name" value="NAD(P)-bd_dom_sf"/>
</dbReference>
<dbReference type="NCBIfam" id="TIGR00465">
    <property type="entry name" value="ilvC"/>
    <property type="match status" value="1"/>
</dbReference>
<dbReference type="NCBIfam" id="NF004017">
    <property type="entry name" value="PRK05479.1"/>
    <property type="match status" value="1"/>
</dbReference>
<dbReference type="NCBIfam" id="NF009940">
    <property type="entry name" value="PRK13403.1"/>
    <property type="match status" value="1"/>
</dbReference>
<dbReference type="PANTHER" id="PTHR21371">
    <property type="entry name" value="KETOL-ACID REDUCTOISOMERASE, MITOCHONDRIAL"/>
    <property type="match status" value="1"/>
</dbReference>
<dbReference type="PANTHER" id="PTHR21371:SF1">
    <property type="entry name" value="KETOL-ACID REDUCTOISOMERASE, MITOCHONDRIAL"/>
    <property type="match status" value="1"/>
</dbReference>
<dbReference type="Pfam" id="PF01450">
    <property type="entry name" value="KARI_C"/>
    <property type="match status" value="1"/>
</dbReference>
<dbReference type="Pfam" id="PF07991">
    <property type="entry name" value="KARI_N"/>
    <property type="match status" value="1"/>
</dbReference>
<dbReference type="PIRSF" id="PIRSF000116">
    <property type="entry name" value="IlvC_gammaproteo"/>
    <property type="match status" value="1"/>
</dbReference>
<dbReference type="SUPFAM" id="SSF48179">
    <property type="entry name" value="6-phosphogluconate dehydrogenase C-terminal domain-like"/>
    <property type="match status" value="1"/>
</dbReference>
<dbReference type="SUPFAM" id="SSF51735">
    <property type="entry name" value="NAD(P)-binding Rossmann-fold domains"/>
    <property type="match status" value="1"/>
</dbReference>
<dbReference type="PROSITE" id="PS51851">
    <property type="entry name" value="KARI_C"/>
    <property type="match status" value="1"/>
</dbReference>
<dbReference type="PROSITE" id="PS51850">
    <property type="entry name" value="KARI_N"/>
    <property type="match status" value="1"/>
</dbReference>
<gene>
    <name evidence="1" type="primary">ilvC</name>
    <name type="ordered locus">BARBAKC583_0917</name>
</gene>
<sequence>MRVYYDCDVNVNLIKEKKVAIVGYGAQGHAHALNLKDSGVQNVRIALHSGSMTTKKAEADGFEVMSVAEAVQWADFIMIATPDELQADIYKEHIHDHLRDGAAISFAHGLSIHFGLIKVKKTVDVVMIAPKGAGRAVRSEYQHGRGIPCLIAVEQDVSGNAHDLALSYACGIGGGRSGIMKTTFREECETDLFGEQAVLCGGLVELIRAGFETLTEAGYAPEMAYFECLHEIKIIADLIYECGIANMNYSISNTAEWGEYVSGPRVITHETKAEMKRILKDIQTGKFTSEWIQEYRAGAARFKDMRRLNSNHLIEQTGDKIRSMMALTKSSAPVDKKHS</sequence>
<organism>
    <name type="scientific">Bartonella bacilliformis (strain ATCC 35685 / KC583 / Herrer 020/F12,63)</name>
    <dbReference type="NCBI Taxonomy" id="360095"/>
    <lineage>
        <taxon>Bacteria</taxon>
        <taxon>Pseudomonadati</taxon>
        <taxon>Pseudomonadota</taxon>
        <taxon>Alphaproteobacteria</taxon>
        <taxon>Hyphomicrobiales</taxon>
        <taxon>Bartonellaceae</taxon>
        <taxon>Bartonella</taxon>
    </lineage>
</organism>